<reference key="1">
    <citation type="journal article" date="1997" name="Nature">
        <title>The nucleotide sequence of Saccharomyces cerevisiae chromosome V.</title>
        <authorList>
            <person name="Dietrich F.S."/>
            <person name="Mulligan J.T."/>
            <person name="Hennessy K.M."/>
            <person name="Yelton M.A."/>
            <person name="Allen E."/>
            <person name="Araujo R."/>
            <person name="Aviles E."/>
            <person name="Berno A."/>
            <person name="Brennan T."/>
            <person name="Carpenter J."/>
            <person name="Chen E."/>
            <person name="Cherry J.M."/>
            <person name="Chung E."/>
            <person name="Duncan M."/>
            <person name="Guzman E."/>
            <person name="Hartzell G."/>
            <person name="Hunicke-Smith S."/>
            <person name="Hyman R.W."/>
            <person name="Kayser A."/>
            <person name="Komp C."/>
            <person name="Lashkari D."/>
            <person name="Lew H."/>
            <person name="Lin D."/>
            <person name="Mosedale D."/>
            <person name="Nakahara K."/>
            <person name="Namath A."/>
            <person name="Norgren R."/>
            <person name="Oefner P."/>
            <person name="Oh C."/>
            <person name="Petel F.X."/>
            <person name="Roberts D."/>
            <person name="Sehl P."/>
            <person name="Schramm S."/>
            <person name="Shogren T."/>
            <person name="Smith V."/>
            <person name="Taylor P."/>
            <person name="Wei Y."/>
            <person name="Botstein D."/>
            <person name="Davis R.W."/>
        </authorList>
    </citation>
    <scope>NUCLEOTIDE SEQUENCE [LARGE SCALE GENOMIC DNA]</scope>
    <source>
        <strain>ATCC 204508 / S288c</strain>
    </source>
</reference>
<reference key="2">
    <citation type="journal article" date="2014" name="G3 (Bethesda)">
        <title>The reference genome sequence of Saccharomyces cerevisiae: Then and now.</title>
        <authorList>
            <person name="Engel S.R."/>
            <person name="Dietrich F.S."/>
            <person name="Fisk D.G."/>
            <person name="Binkley G."/>
            <person name="Balakrishnan R."/>
            <person name="Costanzo M.C."/>
            <person name="Dwight S.S."/>
            <person name="Hitz B.C."/>
            <person name="Karra K."/>
            <person name="Nash R.S."/>
            <person name="Weng S."/>
            <person name="Wong E.D."/>
            <person name="Lloyd P."/>
            <person name="Skrzypek M.S."/>
            <person name="Miyasato S.R."/>
            <person name="Simison M."/>
            <person name="Cherry J.M."/>
        </authorList>
    </citation>
    <scope>GENOME REANNOTATION</scope>
    <source>
        <strain>ATCC 204508 / S288c</strain>
    </source>
</reference>
<reference key="3">
    <citation type="journal article" date="2002" name="Nat. Biotechnol.">
        <title>An integrated approach for finding overlooked genes in yeast.</title>
        <authorList>
            <person name="Kumar A."/>
            <person name="Harrison P.M."/>
            <person name="Cheung K.-H."/>
            <person name="Lan N."/>
            <person name="Echols N."/>
            <person name="Bertone P."/>
            <person name="Miller P."/>
            <person name="Gerstein M.B."/>
            <person name="Snyder M."/>
        </authorList>
    </citation>
    <scope>NUCLEOTIDE SEQUENCE [GENOMIC DNA]</scope>
</reference>
<protein>
    <recommendedName>
        <fullName>Uncharacterized protein YER175W-A</fullName>
    </recommendedName>
</protein>
<gene>
    <name type="ordered locus">YER175W-A</name>
</gene>
<accession>Q8TGU4</accession>
<accession>D3DM84</accession>
<name>YE175_YEAST</name>
<organism>
    <name type="scientific">Saccharomyces cerevisiae (strain ATCC 204508 / S288c)</name>
    <name type="common">Baker's yeast</name>
    <dbReference type="NCBI Taxonomy" id="559292"/>
    <lineage>
        <taxon>Eukaryota</taxon>
        <taxon>Fungi</taxon>
        <taxon>Dikarya</taxon>
        <taxon>Ascomycota</taxon>
        <taxon>Saccharomycotina</taxon>
        <taxon>Saccharomycetes</taxon>
        <taxon>Saccharomycetales</taxon>
        <taxon>Saccharomycetaceae</taxon>
        <taxon>Saccharomyces</taxon>
    </lineage>
</organism>
<sequence length="54" mass="6467">MRLHKTFICFSQNKRGCRNILQENSRMIFENKILIMILRQGIFFNISVSTKISF</sequence>
<proteinExistence type="predicted"/>
<feature type="chain" id="PRO_0000245372" description="Uncharacterized protein YER175W-A">
    <location>
        <begin position="1"/>
        <end position="54"/>
    </location>
</feature>
<keyword id="KW-1185">Reference proteome</keyword>
<dbReference type="EMBL" id="U18922">
    <property type="status" value="NOT_ANNOTATED_CDS"/>
    <property type="molecule type" value="Genomic_DNA"/>
</dbReference>
<dbReference type="EMBL" id="AF479891">
    <property type="protein sequence ID" value="AAL79204.1"/>
    <property type="molecule type" value="Genomic_DNA"/>
</dbReference>
<dbReference type="EMBL" id="BK006939">
    <property type="protein sequence ID" value="DAA07838.1"/>
    <property type="molecule type" value="Genomic_DNA"/>
</dbReference>
<dbReference type="RefSeq" id="NP_878069.1">
    <property type="nucleotide sequence ID" value="NM_001184589.1"/>
</dbReference>
<dbReference type="BioGRID" id="37079">
    <property type="interactions" value="38"/>
</dbReference>
<dbReference type="FunCoup" id="Q8TGU4">
    <property type="interactions" value="6"/>
</dbReference>
<dbReference type="STRING" id="4932.YER175W-A"/>
<dbReference type="PaxDb" id="4932-YER175W-A"/>
<dbReference type="EnsemblFungi" id="YER175W-A_mRNA">
    <property type="protein sequence ID" value="YER175W-A"/>
    <property type="gene ID" value="YER175W-A"/>
</dbReference>
<dbReference type="GeneID" id="1466537"/>
<dbReference type="KEGG" id="sce:YER175W-A"/>
<dbReference type="AGR" id="SGD:S000028625"/>
<dbReference type="SGD" id="S000028625">
    <property type="gene designation" value="YER175W-A"/>
</dbReference>
<dbReference type="VEuPathDB" id="FungiDB:YER175W-A"/>
<dbReference type="HOGENOM" id="CLU_3051680_0_0_1"/>
<dbReference type="InParanoid" id="Q8TGU4"/>
<dbReference type="OrthoDB" id="10280704at2759"/>
<dbReference type="BioCyc" id="YEAST:G3O-30395-MONOMER"/>
<dbReference type="BioGRID-ORCS" id="1466537">
    <property type="hits" value="0 hits in 10 CRISPR screens"/>
</dbReference>
<dbReference type="PRO" id="PR:Q8TGU4"/>
<dbReference type="Proteomes" id="UP000002311">
    <property type="component" value="Chromosome V"/>
</dbReference>
<dbReference type="RNAct" id="Q8TGU4">
    <property type="molecule type" value="protein"/>
</dbReference>